<sequence>MTGAVCPGSFDPVTNGHLDVIGRAAAQFDEVIVTVMVNKNKRGLFTVEERIEMLEDSTADLPNVRVSSWHGLLVDYAKQQGITAIVKGLRGANDFDYELQMAQMNQKLSGVDTLFIPTNPTYSYLSSSLVKEVATFGGDVSDMLPEKVHARLLTRIAERAAESS</sequence>
<comment type="function">
    <text evidence="1">Reversibly transfers an adenylyl group from ATP to 4'-phosphopantetheine, yielding dephospho-CoA (dPCoA) and pyrophosphate.</text>
</comment>
<comment type="catalytic activity">
    <reaction evidence="1">
        <text>(R)-4'-phosphopantetheine + ATP + H(+) = 3'-dephospho-CoA + diphosphate</text>
        <dbReference type="Rhea" id="RHEA:19801"/>
        <dbReference type="ChEBI" id="CHEBI:15378"/>
        <dbReference type="ChEBI" id="CHEBI:30616"/>
        <dbReference type="ChEBI" id="CHEBI:33019"/>
        <dbReference type="ChEBI" id="CHEBI:57328"/>
        <dbReference type="ChEBI" id="CHEBI:61723"/>
        <dbReference type="EC" id="2.7.7.3"/>
    </reaction>
</comment>
<comment type="cofactor">
    <cofactor evidence="1">
        <name>Mg(2+)</name>
        <dbReference type="ChEBI" id="CHEBI:18420"/>
    </cofactor>
</comment>
<comment type="pathway">
    <text evidence="1">Cofactor biosynthesis; coenzyme A biosynthesis; CoA from (R)-pantothenate: step 4/5.</text>
</comment>
<comment type="subunit">
    <text evidence="1">Homohexamer.</text>
</comment>
<comment type="subcellular location">
    <subcellularLocation>
        <location evidence="1">Cytoplasm</location>
    </subcellularLocation>
</comment>
<comment type="similarity">
    <text evidence="1">Belongs to the bacterial CoaD family.</text>
</comment>
<gene>
    <name evidence="1" type="primary">coaD</name>
    <name type="ordered locus">ROP_65700</name>
</gene>
<name>COAD_RHOOB</name>
<reference key="1">
    <citation type="submission" date="2009-03" db="EMBL/GenBank/DDBJ databases">
        <title>Comparison of the complete genome sequences of Rhodococcus erythropolis PR4 and Rhodococcus opacus B4.</title>
        <authorList>
            <person name="Takarada H."/>
            <person name="Sekine M."/>
            <person name="Hosoyama A."/>
            <person name="Yamada R."/>
            <person name="Fujisawa T."/>
            <person name="Omata S."/>
            <person name="Shimizu A."/>
            <person name="Tsukatani N."/>
            <person name="Tanikawa S."/>
            <person name="Fujita N."/>
            <person name="Harayama S."/>
        </authorList>
    </citation>
    <scope>NUCLEOTIDE SEQUENCE [LARGE SCALE GENOMIC DNA]</scope>
    <source>
        <strain>B4</strain>
    </source>
</reference>
<proteinExistence type="inferred from homology"/>
<protein>
    <recommendedName>
        <fullName evidence="1">Phosphopantetheine adenylyltransferase</fullName>
        <ecNumber evidence="1">2.7.7.3</ecNumber>
    </recommendedName>
    <alternativeName>
        <fullName evidence="1">Dephospho-CoA pyrophosphorylase</fullName>
    </alternativeName>
    <alternativeName>
        <fullName evidence="1">Pantetheine-phosphate adenylyltransferase</fullName>
        <shortName evidence="1">PPAT</shortName>
    </alternativeName>
</protein>
<accession>C1B2Q0</accession>
<feature type="chain" id="PRO_1000123297" description="Phosphopantetheine adenylyltransferase">
    <location>
        <begin position="1"/>
        <end position="164"/>
    </location>
</feature>
<feature type="binding site" evidence="1">
    <location>
        <begin position="9"/>
        <end position="10"/>
    </location>
    <ligand>
        <name>ATP</name>
        <dbReference type="ChEBI" id="CHEBI:30616"/>
    </ligand>
</feature>
<feature type="binding site" evidence="1">
    <location>
        <position position="9"/>
    </location>
    <ligand>
        <name>substrate</name>
    </ligand>
</feature>
<feature type="binding site" evidence="1">
    <location>
        <position position="17"/>
    </location>
    <ligand>
        <name>ATP</name>
        <dbReference type="ChEBI" id="CHEBI:30616"/>
    </ligand>
</feature>
<feature type="binding site" evidence="1">
    <location>
        <position position="41"/>
    </location>
    <ligand>
        <name>substrate</name>
    </ligand>
</feature>
<feature type="binding site" evidence="1">
    <location>
        <position position="73"/>
    </location>
    <ligand>
        <name>substrate</name>
    </ligand>
</feature>
<feature type="binding site" evidence="1">
    <location>
        <position position="87"/>
    </location>
    <ligand>
        <name>substrate</name>
    </ligand>
</feature>
<feature type="binding site" evidence="1">
    <location>
        <begin position="88"/>
        <end position="90"/>
    </location>
    <ligand>
        <name>ATP</name>
        <dbReference type="ChEBI" id="CHEBI:30616"/>
    </ligand>
</feature>
<feature type="binding site" evidence="1">
    <location>
        <position position="98"/>
    </location>
    <ligand>
        <name>ATP</name>
        <dbReference type="ChEBI" id="CHEBI:30616"/>
    </ligand>
</feature>
<feature type="binding site" evidence="1">
    <location>
        <begin position="122"/>
        <end position="128"/>
    </location>
    <ligand>
        <name>ATP</name>
        <dbReference type="ChEBI" id="CHEBI:30616"/>
    </ligand>
</feature>
<feature type="site" description="Transition state stabilizer" evidence="1">
    <location>
        <position position="17"/>
    </location>
</feature>
<organism>
    <name type="scientific">Rhodococcus opacus (strain B4)</name>
    <dbReference type="NCBI Taxonomy" id="632772"/>
    <lineage>
        <taxon>Bacteria</taxon>
        <taxon>Bacillati</taxon>
        <taxon>Actinomycetota</taxon>
        <taxon>Actinomycetes</taxon>
        <taxon>Mycobacteriales</taxon>
        <taxon>Nocardiaceae</taxon>
        <taxon>Rhodococcus</taxon>
    </lineage>
</organism>
<evidence type="ECO:0000255" key="1">
    <source>
        <dbReference type="HAMAP-Rule" id="MF_00151"/>
    </source>
</evidence>
<keyword id="KW-0067">ATP-binding</keyword>
<keyword id="KW-0173">Coenzyme A biosynthesis</keyword>
<keyword id="KW-0963">Cytoplasm</keyword>
<keyword id="KW-0460">Magnesium</keyword>
<keyword id="KW-0547">Nucleotide-binding</keyword>
<keyword id="KW-0548">Nucleotidyltransferase</keyword>
<keyword id="KW-0808">Transferase</keyword>
<dbReference type="EC" id="2.7.7.3" evidence="1"/>
<dbReference type="EMBL" id="AP011115">
    <property type="protein sequence ID" value="BAH54817.1"/>
    <property type="molecule type" value="Genomic_DNA"/>
</dbReference>
<dbReference type="RefSeq" id="WP_015890262.1">
    <property type="nucleotide sequence ID" value="NC_012522.1"/>
</dbReference>
<dbReference type="SMR" id="C1B2Q0"/>
<dbReference type="STRING" id="632772.ROP_65700"/>
<dbReference type="KEGG" id="rop:ROP_65700"/>
<dbReference type="PATRIC" id="fig|632772.20.peg.6856"/>
<dbReference type="HOGENOM" id="CLU_100149_1_0_11"/>
<dbReference type="OrthoDB" id="9806661at2"/>
<dbReference type="UniPathway" id="UPA00241">
    <property type="reaction ID" value="UER00355"/>
</dbReference>
<dbReference type="Proteomes" id="UP000002212">
    <property type="component" value="Chromosome"/>
</dbReference>
<dbReference type="GO" id="GO:0005737">
    <property type="term" value="C:cytoplasm"/>
    <property type="evidence" value="ECO:0007669"/>
    <property type="project" value="UniProtKB-SubCell"/>
</dbReference>
<dbReference type="GO" id="GO:0005524">
    <property type="term" value="F:ATP binding"/>
    <property type="evidence" value="ECO:0007669"/>
    <property type="project" value="UniProtKB-KW"/>
</dbReference>
<dbReference type="GO" id="GO:0004595">
    <property type="term" value="F:pantetheine-phosphate adenylyltransferase activity"/>
    <property type="evidence" value="ECO:0007669"/>
    <property type="project" value="UniProtKB-UniRule"/>
</dbReference>
<dbReference type="GO" id="GO:0015937">
    <property type="term" value="P:coenzyme A biosynthetic process"/>
    <property type="evidence" value="ECO:0007669"/>
    <property type="project" value="UniProtKB-UniRule"/>
</dbReference>
<dbReference type="CDD" id="cd02163">
    <property type="entry name" value="PPAT"/>
    <property type="match status" value="1"/>
</dbReference>
<dbReference type="FunFam" id="3.40.50.620:FF:000012">
    <property type="entry name" value="Phosphopantetheine adenylyltransferase"/>
    <property type="match status" value="1"/>
</dbReference>
<dbReference type="Gene3D" id="3.40.50.620">
    <property type="entry name" value="HUPs"/>
    <property type="match status" value="1"/>
</dbReference>
<dbReference type="HAMAP" id="MF_00151">
    <property type="entry name" value="PPAT_bact"/>
    <property type="match status" value="1"/>
</dbReference>
<dbReference type="InterPro" id="IPR004821">
    <property type="entry name" value="Cyt_trans-like"/>
</dbReference>
<dbReference type="InterPro" id="IPR001980">
    <property type="entry name" value="PPAT"/>
</dbReference>
<dbReference type="InterPro" id="IPR014729">
    <property type="entry name" value="Rossmann-like_a/b/a_fold"/>
</dbReference>
<dbReference type="NCBIfam" id="TIGR01510">
    <property type="entry name" value="coaD_prev_kdtB"/>
    <property type="match status" value="1"/>
</dbReference>
<dbReference type="NCBIfam" id="TIGR00125">
    <property type="entry name" value="cyt_tran_rel"/>
    <property type="match status" value="1"/>
</dbReference>
<dbReference type="PANTHER" id="PTHR21342">
    <property type="entry name" value="PHOSPHOPANTETHEINE ADENYLYLTRANSFERASE"/>
    <property type="match status" value="1"/>
</dbReference>
<dbReference type="PANTHER" id="PTHR21342:SF1">
    <property type="entry name" value="PHOSPHOPANTETHEINE ADENYLYLTRANSFERASE"/>
    <property type="match status" value="1"/>
</dbReference>
<dbReference type="Pfam" id="PF01467">
    <property type="entry name" value="CTP_transf_like"/>
    <property type="match status" value="1"/>
</dbReference>
<dbReference type="PRINTS" id="PR01020">
    <property type="entry name" value="LPSBIOSNTHSS"/>
</dbReference>
<dbReference type="SUPFAM" id="SSF52374">
    <property type="entry name" value="Nucleotidylyl transferase"/>
    <property type="match status" value="1"/>
</dbReference>